<gene>
    <name evidence="10 12" type="primary">Ric8a</name>
</gene>
<dbReference type="EMBL" id="AABR03000472">
    <property type="status" value="NOT_ANNOTATED_CDS"/>
    <property type="molecule type" value="Genomic_DNA"/>
</dbReference>
<dbReference type="EMBL" id="AY177754">
    <property type="protein sequence ID" value="AAO23336.1"/>
    <property type="molecule type" value="mRNA"/>
</dbReference>
<dbReference type="RefSeq" id="NP_001093990.1">
    <property type="nucleotide sequence ID" value="NM_001100520.1"/>
</dbReference>
<dbReference type="PDB" id="6NMG">
    <property type="method" value="X-ray"/>
    <property type="resolution" value="2.20 A"/>
    <property type="chains" value="A/B=1-452"/>
</dbReference>
<dbReference type="PDB" id="6NMJ">
    <property type="method" value="X-ray"/>
    <property type="resolution" value="2.30 A"/>
    <property type="chains" value="A/B=1-452"/>
</dbReference>
<dbReference type="PDB" id="6TYL">
    <property type="method" value="X-ray"/>
    <property type="resolution" value="3.30 A"/>
    <property type="chains" value="A/F=1-491"/>
</dbReference>
<dbReference type="PDB" id="6UKT">
    <property type="method" value="EM"/>
    <property type="resolution" value="3.87 A"/>
    <property type="chains" value="A=1-491"/>
</dbReference>
<dbReference type="PDB" id="6VU5">
    <property type="method" value="EM"/>
    <property type="resolution" value="3.50 A"/>
    <property type="chains" value="A=1-450"/>
</dbReference>
<dbReference type="PDB" id="6VU8">
    <property type="method" value="EM"/>
    <property type="resolution" value="4.14 A"/>
    <property type="chains" value="A=1-530"/>
</dbReference>
<dbReference type="PDB" id="8AHY">
    <property type="method" value="X-ray"/>
    <property type="resolution" value="1.70 A"/>
    <property type="chains" value="P=400-432"/>
</dbReference>
<dbReference type="PDB" id="8ALH">
    <property type="method" value="X-ray"/>
    <property type="resolution" value="1.86 A"/>
    <property type="chains" value="P=400-429"/>
</dbReference>
<dbReference type="PDB" id="8ALM">
    <property type="method" value="X-ray"/>
    <property type="resolution" value="1.85 A"/>
    <property type="chains" value="P=400-432"/>
</dbReference>
<dbReference type="PDBsum" id="6NMG"/>
<dbReference type="PDBsum" id="6NMJ"/>
<dbReference type="PDBsum" id="6TYL"/>
<dbReference type="PDBsum" id="6UKT"/>
<dbReference type="PDBsum" id="6VU5"/>
<dbReference type="PDBsum" id="6VU8"/>
<dbReference type="PDBsum" id="8AHY"/>
<dbReference type="PDBsum" id="8ALH"/>
<dbReference type="PDBsum" id="8ALM"/>
<dbReference type="EMDB" id="EMD-20812"/>
<dbReference type="EMDB" id="EMD-21387"/>
<dbReference type="EMDB" id="EMD-21388"/>
<dbReference type="SMR" id="Q80ZG1"/>
<dbReference type="CORUM" id="Q80ZG1"/>
<dbReference type="FunCoup" id="Q80ZG1">
    <property type="interactions" value="3940"/>
</dbReference>
<dbReference type="STRING" id="10116.ENSRNOP00000018470"/>
<dbReference type="PhosphoSitePlus" id="Q80ZG1"/>
<dbReference type="jPOST" id="Q80ZG1"/>
<dbReference type="PaxDb" id="10116-ENSRNOP00000018470"/>
<dbReference type="PeptideAtlas" id="Q80ZG1"/>
<dbReference type="Ensembl" id="ENSRNOT00000018470.6">
    <property type="protein sequence ID" value="ENSRNOP00000018470.4"/>
    <property type="gene ID" value="ENSRNOG00000013256.6"/>
</dbReference>
<dbReference type="GeneID" id="293614"/>
<dbReference type="KEGG" id="rno:293614"/>
<dbReference type="UCSC" id="RGD:727957">
    <property type="organism name" value="rat"/>
</dbReference>
<dbReference type="AGR" id="RGD:727957"/>
<dbReference type="CTD" id="60626"/>
<dbReference type="RGD" id="727957">
    <property type="gene designation" value="Ric8a"/>
</dbReference>
<dbReference type="eggNOG" id="KOG4464">
    <property type="taxonomic scope" value="Eukaryota"/>
</dbReference>
<dbReference type="GeneTree" id="ENSGT00390000014700"/>
<dbReference type="HOGENOM" id="CLU_018602_1_0_1"/>
<dbReference type="InParanoid" id="Q80ZG1"/>
<dbReference type="OMA" id="NADPIFT"/>
<dbReference type="OrthoDB" id="68160at9989"/>
<dbReference type="TreeFam" id="TF314907"/>
<dbReference type="PRO" id="PR:Q80ZG1"/>
<dbReference type="Proteomes" id="UP000002494">
    <property type="component" value="Chromosome 1"/>
</dbReference>
<dbReference type="Bgee" id="ENSRNOG00000013256">
    <property type="expression patterns" value="Expressed in pancreas and 19 other cell types or tissues"/>
</dbReference>
<dbReference type="GO" id="GO:0005938">
    <property type="term" value="C:cell cortex"/>
    <property type="evidence" value="ECO:0007669"/>
    <property type="project" value="UniProtKB-SubCell"/>
</dbReference>
<dbReference type="GO" id="GO:0005737">
    <property type="term" value="C:cytoplasm"/>
    <property type="evidence" value="ECO:0000314"/>
    <property type="project" value="UniProtKB"/>
</dbReference>
<dbReference type="GO" id="GO:0016020">
    <property type="term" value="C:membrane"/>
    <property type="evidence" value="ECO:0000266"/>
    <property type="project" value="RGD"/>
</dbReference>
<dbReference type="GO" id="GO:0005886">
    <property type="term" value="C:plasma membrane"/>
    <property type="evidence" value="ECO:0000314"/>
    <property type="project" value="UniProtKB"/>
</dbReference>
<dbReference type="GO" id="GO:0001965">
    <property type="term" value="F:G-protein alpha-subunit binding"/>
    <property type="evidence" value="ECO:0000314"/>
    <property type="project" value="UniProtKB"/>
</dbReference>
<dbReference type="GO" id="GO:0005096">
    <property type="term" value="F:GTPase activator activity"/>
    <property type="evidence" value="ECO:0000314"/>
    <property type="project" value="UniProtKB"/>
</dbReference>
<dbReference type="GO" id="GO:0005085">
    <property type="term" value="F:guanyl-nucleotide exchange factor activity"/>
    <property type="evidence" value="ECO:0000314"/>
    <property type="project" value="UniProtKB"/>
</dbReference>
<dbReference type="GO" id="GO:0044183">
    <property type="term" value="F:protein folding chaperone"/>
    <property type="evidence" value="ECO:0000314"/>
    <property type="project" value="UniProtKB"/>
</dbReference>
<dbReference type="GO" id="GO:0007193">
    <property type="term" value="P:adenylate cyclase-inhibiting G protein-coupled receptor signaling pathway"/>
    <property type="evidence" value="ECO:0000266"/>
    <property type="project" value="RGD"/>
</dbReference>
<dbReference type="GO" id="GO:0071711">
    <property type="term" value="P:basement membrane organization"/>
    <property type="evidence" value="ECO:0000266"/>
    <property type="project" value="RGD"/>
</dbReference>
<dbReference type="GO" id="GO:0042074">
    <property type="term" value="P:cell migration involved in gastrulation"/>
    <property type="evidence" value="ECO:0000266"/>
    <property type="project" value="RGD"/>
</dbReference>
<dbReference type="GO" id="GO:0070586">
    <property type="term" value="P:cell-cell adhesion involved in gastrulation"/>
    <property type="evidence" value="ECO:0000266"/>
    <property type="project" value="RGD"/>
</dbReference>
<dbReference type="GO" id="GO:0007186">
    <property type="term" value="P:G protein-coupled receptor signaling pathway"/>
    <property type="evidence" value="ECO:0000314"/>
    <property type="project" value="UniProtKB"/>
</dbReference>
<dbReference type="GO" id="GO:0007369">
    <property type="term" value="P:gastrulation"/>
    <property type="evidence" value="ECO:0000266"/>
    <property type="project" value="RGD"/>
</dbReference>
<dbReference type="GO" id="GO:0001701">
    <property type="term" value="P:in utero embryonic development"/>
    <property type="evidence" value="ECO:0000266"/>
    <property type="project" value="RGD"/>
</dbReference>
<dbReference type="GO" id="GO:0009416">
    <property type="term" value="P:response to light stimulus"/>
    <property type="evidence" value="ECO:0000266"/>
    <property type="project" value="RGD"/>
</dbReference>
<dbReference type="GO" id="GO:0001944">
    <property type="term" value="P:vasculature development"/>
    <property type="evidence" value="ECO:0000266"/>
    <property type="project" value="RGD"/>
</dbReference>
<dbReference type="GO" id="GO:0008542">
    <property type="term" value="P:visual learning"/>
    <property type="evidence" value="ECO:0000266"/>
    <property type="project" value="RGD"/>
</dbReference>
<dbReference type="FunFam" id="1.25.10.10:FF:000447">
    <property type="entry name" value="RIC8 guanine nucleotide exchange factor A"/>
    <property type="match status" value="1"/>
</dbReference>
<dbReference type="Gene3D" id="1.25.10.10">
    <property type="entry name" value="Leucine-rich Repeat Variant"/>
    <property type="match status" value="1"/>
</dbReference>
<dbReference type="InterPro" id="IPR011989">
    <property type="entry name" value="ARM-like"/>
</dbReference>
<dbReference type="InterPro" id="IPR016024">
    <property type="entry name" value="ARM-type_fold"/>
</dbReference>
<dbReference type="InterPro" id="IPR008376">
    <property type="entry name" value="Chaperone_Ric-8_A/B"/>
</dbReference>
<dbReference type="InterPro" id="IPR019318">
    <property type="entry name" value="Gua_nucleotide_exch_fac_Ric8"/>
</dbReference>
<dbReference type="PANTHER" id="PTHR12425">
    <property type="entry name" value="SYNEMBRYN"/>
    <property type="match status" value="1"/>
</dbReference>
<dbReference type="PANTHER" id="PTHR12425:SF4">
    <property type="entry name" value="SYNEMBRYN-A"/>
    <property type="match status" value="1"/>
</dbReference>
<dbReference type="Pfam" id="PF10165">
    <property type="entry name" value="Ric8"/>
    <property type="match status" value="1"/>
</dbReference>
<dbReference type="PRINTS" id="PR01802">
    <property type="entry name" value="SYNEMBRYN"/>
</dbReference>
<dbReference type="SUPFAM" id="SSF48371">
    <property type="entry name" value="ARM repeat"/>
    <property type="match status" value="1"/>
</dbReference>
<accession>Q80ZG1</accession>
<accession>B1H241</accession>
<sequence>MEPRAVADALETGEEDAVTEALRSFNREHSQSFTFDDAQQEDRKRLAKLLVSVLEQGLSPKHRVTWLQTIRILSRDRSCLDSFASRQSLHALACYADIAISEEPIPQPPDMDVLLESLKCLCNLVLSSPTAQMLAAEARLVVRLAERVGLYRKRSYPHEVQFFDLRLLFLLTALRTDVRQQLFQELHGVRLLTDALELTLGVAPKENPLVILPAQETERAMEILKVLFNITYDSVKREVDEEDAALYRYLGTLLRHCVMADAAGDRTEEFHGHTVNLLGNLPLKCLDVLLALELHEGSLEFMGVNMDVINALLAFLEKRLHQTHRLKECVAPVLSVLTECARMHRPARKFLKAQVLPPLRDVRTRPEVGDLLRNKLVRLMTHLDTDVKRVAAEFLFVLCSESVPRFIKYTGYGNAAGLLAARGLMAGGRPEGQYSEDEDTDTEEYREAKASINPVTGRVEEKPPNPMEGMTEEQKEHEAMKLVNMFDKLSRHRLIQPMGMSPRGHLTSLQDAMCETMEGQLSSDPDSDPD</sequence>
<organism>
    <name type="scientific">Rattus norvegicus</name>
    <name type="common">Rat</name>
    <dbReference type="NCBI Taxonomy" id="10116"/>
    <lineage>
        <taxon>Eukaryota</taxon>
        <taxon>Metazoa</taxon>
        <taxon>Chordata</taxon>
        <taxon>Craniata</taxon>
        <taxon>Vertebrata</taxon>
        <taxon>Euteleostomi</taxon>
        <taxon>Mammalia</taxon>
        <taxon>Eutheria</taxon>
        <taxon>Euarchontoglires</taxon>
        <taxon>Glires</taxon>
        <taxon>Rodentia</taxon>
        <taxon>Myomorpha</taxon>
        <taxon>Muroidea</taxon>
        <taxon>Muridae</taxon>
        <taxon>Murinae</taxon>
        <taxon>Rattus</taxon>
    </lineage>
</organism>
<name>RIC8A_RAT</name>
<proteinExistence type="evidence at protein level"/>
<reference key="1">
    <citation type="journal article" date="2004" name="Nature">
        <title>Genome sequence of the Brown Norway rat yields insights into mammalian evolution.</title>
        <authorList>
            <person name="Gibbs R.A."/>
            <person name="Weinstock G.M."/>
            <person name="Metzker M.L."/>
            <person name="Muzny D.M."/>
            <person name="Sodergren E.J."/>
            <person name="Scherer S."/>
            <person name="Scott G."/>
            <person name="Steffen D."/>
            <person name="Worley K.C."/>
            <person name="Burch P.E."/>
            <person name="Okwuonu G."/>
            <person name="Hines S."/>
            <person name="Lewis L."/>
            <person name="Deramo C."/>
            <person name="Delgado O."/>
            <person name="Dugan-Rocha S."/>
            <person name="Miner G."/>
            <person name="Morgan M."/>
            <person name="Hawes A."/>
            <person name="Gill R."/>
            <person name="Holt R.A."/>
            <person name="Adams M.D."/>
            <person name="Amanatides P.G."/>
            <person name="Baden-Tillson H."/>
            <person name="Barnstead M."/>
            <person name="Chin S."/>
            <person name="Evans C.A."/>
            <person name="Ferriera S."/>
            <person name="Fosler C."/>
            <person name="Glodek A."/>
            <person name="Gu Z."/>
            <person name="Jennings D."/>
            <person name="Kraft C.L."/>
            <person name="Nguyen T."/>
            <person name="Pfannkoch C.M."/>
            <person name="Sitter C."/>
            <person name="Sutton G.G."/>
            <person name="Venter J.C."/>
            <person name="Woodage T."/>
            <person name="Smith D."/>
            <person name="Lee H.-M."/>
            <person name="Gustafson E."/>
            <person name="Cahill P."/>
            <person name="Kana A."/>
            <person name="Doucette-Stamm L."/>
            <person name="Weinstock K."/>
            <person name="Fechtel K."/>
            <person name="Weiss R.B."/>
            <person name="Dunn D.M."/>
            <person name="Green E.D."/>
            <person name="Blakesley R.W."/>
            <person name="Bouffard G.G."/>
            <person name="De Jong P.J."/>
            <person name="Osoegawa K."/>
            <person name="Zhu B."/>
            <person name="Marra M."/>
            <person name="Schein J."/>
            <person name="Bosdet I."/>
            <person name="Fjell C."/>
            <person name="Jones S."/>
            <person name="Krzywinski M."/>
            <person name="Mathewson C."/>
            <person name="Siddiqui A."/>
            <person name="Wye N."/>
            <person name="McPherson J."/>
            <person name="Zhao S."/>
            <person name="Fraser C.M."/>
            <person name="Shetty J."/>
            <person name="Shatsman S."/>
            <person name="Geer K."/>
            <person name="Chen Y."/>
            <person name="Abramzon S."/>
            <person name="Nierman W.C."/>
            <person name="Havlak P.H."/>
            <person name="Chen R."/>
            <person name="Durbin K.J."/>
            <person name="Egan A."/>
            <person name="Ren Y."/>
            <person name="Song X.-Z."/>
            <person name="Li B."/>
            <person name="Liu Y."/>
            <person name="Qin X."/>
            <person name="Cawley S."/>
            <person name="Cooney A.J."/>
            <person name="D'Souza L.M."/>
            <person name="Martin K."/>
            <person name="Wu J.Q."/>
            <person name="Gonzalez-Garay M.L."/>
            <person name="Jackson A.R."/>
            <person name="Kalafus K.J."/>
            <person name="McLeod M.P."/>
            <person name="Milosavljevic A."/>
            <person name="Virk D."/>
            <person name="Volkov A."/>
            <person name="Wheeler D.A."/>
            <person name="Zhang Z."/>
            <person name="Bailey J.A."/>
            <person name="Eichler E.E."/>
            <person name="Tuzun E."/>
            <person name="Birney E."/>
            <person name="Mongin E."/>
            <person name="Ureta-Vidal A."/>
            <person name="Woodwark C."/>
            <person name="Zdobnov E."/>
            <person name="Bork P."/>
            <person name="Suyama M."/>
            <person name="Torrents D."/>
            <person name="Alexandersson M."/>
            <person name="Trask B.J."/>
            <person name="Young J.M."/>
            <person name="Huang H."/>
            <person name="Wang H."/>
            <person name="Xing H."/>
            <person name="Daniels S."/>
            <person name="Gietzen D."/>
            <person name="Schmidt J."/>
            <person name="Stevens K."/>
            <person name="Vitt U."/>
            <person name="Wingrove J."/>
            <person name="Camara F."/>
            <person name="Mar Alba M."/>
            <person name="Abril J.F."/>
            <person name="Guigo R."/>
            <person name="Smit A."/>
            <person name="Dubchak I."/>
            <person name="Rubin E.M."/>
            <person name="Couronne O."/>
            <person name="Poliakov A."/>
            <person name="Huebner N."/>
            <person name="Ganten D."/>
            <person name="Goesele C."/>
            <person name="Hummel O."/>
            <person name="Kreitler T."/>
            <person name="Lee Y.-A."/>
            <person name="Monti J."/>
            <person name="Schulz H."/>
            <person name="Zimdahl H."/>
            <person name="Himmelbauer H."/>
            <person name="Lehrach H."/>
            <person name="Jacob H.J."/>
            <person name="Bromberg S."/>
            <person name="Gullings-Handley J."/>
            <person name="Jensen-Seaman M.I."/>
            <person name="Kwitek A.E."/>
            <person name="Lazar J."/>
            <person name="Pasko D."/>
            <person name="Tonellato P.J."/>
            <person name="Twigger S."/>
            <person name="Ponting C.P."/>
            <person name="Duarte J.M."/>
            <person name="Rice S."/>
            <person name="Goodstadt L."/>
            <person name="Beatson S.A."/>
            <person name="Emes R.D."/>
            <person name="Winter E.E."/>
            <person name="Webber C."/>
            <person name="Brandt P."/>
            <person name="Nyakatura G."/>
            <person name="Adetobi M."/>
            <person name="Chiaromonte F."/>
            <person name="Elnitski L."/>
            <person name="Eswara P."/>
            <person name="Hardison R.C."/>
            <person name="Hou M."/>
            <person name="Kolbe D."/>
            <person name="Makova K."/>
            <person name="Miller W."/>
            <person name="Nekrutenko A."/>
            <person name="Riemer C."/>
            <person name="Schwartz S."/>
            <person name="Taylor J."/>
            <person name="Yang S."/>
            <person name="Zhang Y."/>
            <person name="Lindpaintner K."/>
            <person name="Andrews T.D."/>
            <person name="Caccamo M."/>
            <person name="Clamp M."/>
            <person name="Clarke L."/>
            <person name="Curwen V."/>
            <person name="Durbin R.M."/>
            <person name="Eyras E."/>
            <person name="Searle S.M."/>
            <person name="Cooper G.M."/>
            <person name="Batzoglou S."/>
            <person name="Brudno M."/>
            <person name="Sidow A."/>
            <person name="Stone E.A."/>
            <person name="Payseur B.A."/>
            <person name="Bourque G."/>
            <person name="Lopez-Otin C."/>
            <person name="Puente X.S."/>
            <person name="Chakrabarti K."/>
            <person name="Chatterji S."/>
            <person name="Dewey C."/>
            <person name="Pachter L."/>
            <person name="Bray N."/>
            <person name="Yap V.B."/>
            <person name="Caspi A."/>
            <person name="Tesler G."/>
            <person name="Pevzner P.A."/>
            <person name="Haussler D."/>
            <person name="Roskin K.M."/>
            <person name="Baertsch R."/>
            <person name="Clawson H."/>
            <person name="Furey T.S."/>
            <person name="Hinrichs A.S."/>
            <person name="Karolchik D."/>
            <person name="Kent W.J."/>
            <person name="Rosenbloom K.R."/>
            <person name="Trumbower H."/>
            <person name="Weirauch M."/>
            <person name="Cooper D.N."/>
            <person name="Stenson P.D."/>
            <person name="Ma B."/>
            <person name="Brent M."/>
            <person name="Arumugam M."/>
            <person name="Shteynberg D."/>
            <person name="Copley R.R."/>
            <person name="Taylor M.S."/>
            <person name="Riethman H."/>
            <person name="Mudunuri U."/>
            <person name="Peterson J."/>
            <person name="Guyer M."/>
            <person name="Felsenfeld A."/>
            <person name="Old S."/>
            <person name="Mockrin S."/>
            <person name="Collins F.S."/>
        </authorList>
    </citation>
    <scope>NUCLEOTIDE SEQUENCE [LARGE SCALE GENOMIC DNA]</scope>
    <source>
        <strain>Brown Norway</strain>
    </source>
</reference>
<reference key="2">
    <citation type="journal article" date="2003" name="J. Biol. Chem.">
        <title>Mammalian Ric-8A (synembryn) is a heterotrimeric Galpha protein guanine nucleotide exchange factor.</title>
        <authorList>
            <person name="Tall G.G."/>
            <person name="Krumins A.M."/>
            <person name="Gilman A.G."/>
        </authorList>
    </citation>
    <scope>NUCLEOTIDE SEQUENCE [MRNA] OF 4-529</scope>
    <scope>FUNCTION</scope>
    <scope>INTERACTION WITH GNAI1; GNAO1; GNAQ AND GNA13</scope>
    <source>
        <strain>Sprague-Dawley</strain>
        <tissue>Brain</tissue>
    </source>
</reference>
<reference key="3">
    <citation type="journal article" date="2005" name="Proc. Natl. Acad. Sci. U.S.A.">
        <title>Resistance to inhibitors of cholinesterase 8A catalyzes release of Galphai-GTP and nuclear mitotic apparatus protein (NuMA) from NuMA/LGN/Galphai-GDP complexes.</title>
        <authorList>
            <person name="Tall G.G."/>
            <person name="Gilman A.G."/>
        </authorList>
    </citation>
    <scope>FUNCTION</scope>
</reference>
<reference key="4">
    <citation type="journal article" date="2011" name="Biochemistry">
        <title>Activation of the regulator of G protein signaling 14-Galphai1-GDP signaling complex is regulated by resistance to inhibitors of cholinesterase-8A.</title>
        <authorList>
            <person name="Vellano C.P."/>
            <person name="Shu F.J."/>
            <person name="Ramineni S."/>
            <person name="Yates C.K."/>
            <person name="Tall G.G."/>
            <person name="Hepler J.R."/>
        </authorList>
    </citation>
    <scope>INTERACTION WITH GNAI1 AND RGS14</scope>
    <scope>SUBCELLULAR LOCATION</scope>
</reference>
<reference key="5">
    <citation type="journal article" date="2018" name="Sci. Signal.">
        <title>Dual phosphorylation of Ric-8A enhances its ability to mediate G protein alpha subunit folding and to stimulate guanine nucleotide exchange.</title>
        <authorList>
            <person name="Papasergi-Scott M.M."/>
            <person name="Stoveken H.M."/>
            <person name="MacConnachie L."/>
            <person name="Chan P.-Y."/>
            <person name="Gabay M."/>
            <person name="Wong D."/>
            <person name="Freeman R.S."/>
            <person name="Beg A.A."/>
            <person name="Tall G.G."/>
        </authorList>
    </citation>
    <scope>FUNCTION</scope>
    <scope>PHOSPHORYLATION AT SER-435; THR-440; SER-523 AND SER-527</scope>
    <scope>MUTAGENESIS OF SER-435 AND THR-440</scope>
</reference>
<reference evidence="13 14" key="6">
    <citation type="journal article" date="2019" name="Structure">
        <title>Structure, Function, and Dynamics of the Galpha Binding Domain of Ric-8A.</title>
        <authorList>
            <person name="Zeng B."/>
            <person name="Mou T.C."/>
            <person name="Doukov T.I."/>
            <person name="Steiner A."/>
            <person name="Yu W."/>
            <person name="Papasergi-Scott M."/>
            <person name="Tall G.G."/>
            <person name="Hagn F."/>
            <person name="Sprang S.R."/>
        </authorList>
    </citation>
    <scope>X-RAY CRYSTALLOGRAPHY (2.20 ANGSTROMS) OF 1-452</scope>
    <scope>FUNCTION</scope>
    <scope>PHOSPHORYLATION AT SER-435 AND THR-440</scope>
</reference>
<reference evidence="17 18" key="7">
    <citation type="journal article" date="2020" name="Cell Rep.">
        <title>Structures of Galpha proteins in complex with their chaperone reveal quality control mechanisms.</title>
        <authorList>
            <person name="Seven A.B."/>
            <person name="Hilger D."/>
            <person name="Papasergi-Scott M.M."/>
            <person name="Zhang L."/>
            <person name="Qu Q."/>
            <person name="Kobilka B.K."/>
            <person name="Tall G.G."/>
            <person name="Skiniotis G."/>
        </authorList>
    </citation>
    <scope>STRUCTURE BY ELECTRON MICROSCOPY (4.14 ANGSTROMS) IN COMPLEX WITH GNAI1 AND GNAQ</scope>
    <scope>FUNCTION</scope>
    <scope>INTERACTION WITH GNAI1 AND GNAQ</scope>
    <scope>PHOSPHORYLATION AT SER-435; THR-440; SER-522; SER-523 AND SER-527</scope>
    <scope>MUTAGENESIS OF ARG-71; ASN-123; PHE-163; LEU-174; LYS-225; PHE-228; HIS-273; 365-ARG--GLU-367; THR-381; ARG-389; ALA-416 AND ALA-420</scope>
</reference>
<reference evidence="15 16" key="8">
    <citation type="journal article" date="2020" name="Nat. Commun.">
        <title>Structure of the G protein chaperone and Chaperone Ric-8A bound to Galphai1.</title>
        <authorList>
            <person name="McClelland L.J."/>
            <person name="Zhang K."/>
            <person name="Mou T.C."/>
            <person name="Johnston J."/>
            <person name="Yates-Hansen C."/>
            <person name="Li S."/>
            <person name="Thomas C.J."/>
            <person name="Doukov T.I."/>
            <person name="Triest S."/>
            <person name="Wohlkonig A."/>
            <person name="Tall G.G."/>
            <person name="Steyaert J."/>
            <person name="Chiu W."/>
            <person name="Sprang S.R."/>
        </authorList>
    </citation>
    <scope>X-RAY CRYSTALLOGRAPHY (3.30 ANGSTROMS) OF 1-491 IN COMPLEX WITH GNAI1</scope>
    <scope>FUNCTION</scope>
    <scope>INTERACTION WITH GNAI1</scope>
    <scope>PHOSPHORYLATION AT SER-435 AND THR-440</scope>
    <scope>MUTAGENESIS OF LEU-383; TYR-412; ALA-415; SER-435; THR-440; GLU-478 AND LEU-482</scope>
</reference>
<keyword id="KW-0002">3D-structure</keyword>
<keyword id="KW-0143">Chaperone</keyword>
<keyword id="KW-0963">Cytoplasm</keyword>
<keyword id="KW-0344">Guanine-nucleotide releasing factor</keyword>
<keyword id="KW-0597">Phosphoprotein</keyword>
<keyword id="KW-1185">Reference proteome</keyword>
<protein>
    <recommendedName>
        <fullName evidence="11">Chaperone Ric-8A</fullName>
    </recommendedName>
    <alternativeName>
        <fullName evidence="10">Synembryn-A</fullName>
    </alternativeName>
</protein>
<comment type="function">
    <text evidence="2 3 4 6 7 8 9">Chaperone that specifically binds and folds nascent G alpha proteins prior to G protein heterotrimer formation, promoting their stability and activity: folds GNAI1, GNAO1, GNA13 and GNAQ (PubMed:29844055, PubMed:32103024, PubMed:32126208). Does not fold G(s) G-alpha proteins GNAS nor GNAL (PubMed:29844055). Also acts as a guanine nucleotide exchange factor (GEF) for G alpha proteins by stimulating exchange of bound GDP for free GTP (PubMed:12509430, PubMed:16275912, PubMed:29844055, PubMed:31155309, PubMed:32103024). Involved in regulation of microtubule pulling forces during mitotic movement of chromosomes by stimulating G(i)-alpha protein (GNAI1), possibly leading to release G(i)-alpha-GTP and NuMA proteins from the NuMA-GPSM2-G(i)-alpha-GDP complex (PubMed:12509430, PubMed:16275912). Also acts as an activator for G(q)-alpha (GNAQ) protein by enhancing the G(q)-coupled receptor-mediated ERK activation (By similarity).</text>
</comment>
<comment type="subunit">
    <text evidence="2 3 5 8 9">Interacts with GDP-bound G alpha proteins GNAI1, GNAO1 and GNAQ, and with GNA13 with lower affinity (PubMed:12509430, PubMed:21158412, PubMed:32103024, PubMed:32126208). Does not interact with G-alpha proteins when they are in complex with subunits beta and gamma (PubMed:12509430, PubMed:21158412). Interacts (via C-terminus) with RGS14; the interaction stimulates the dissociation of the complex between RGS14 and the active GTP-bound form of GNAI1 (PubMed:12509430, PubMed:21158412). Interacts with NCS1; interaction is favored in the absence of Ca(2+) and myristoylation of NCS1 is not required (By similarity).</text>
</comment>
<comment type="subcellular location">
    <subcellularLocation>
        <location evidence="5">Cytoplasm</location>
        <location evidence="5">Cell cortex</location>
    </subcellularLocation>
    <subcellularLocation>
        <location evidence="5">Cytoplasm</location>
    </subcellularLocation>
</comment>
<comment type="PTM">
    <text evidence="6 8 9">Phosphorylated at Ser-435 and Thr-440 by CK2, stabilizing its interface with G alpha proteins.</text>
</comment>
<comment type="similarity">
    <text evidence="11">Belongs to the synembryn family.</text>
</comment>
<evidence type="ECO:0000250" key="1">
    <source>
        <dbReference type="UniProtKB" id="Q3TIR3"/>
    </source>
</evidence>
<evidence type="ECO:0000250" key="2">
    <source>
        <dbReference type="UniProtKB" id="Q9NPQ8"/>
    </source>
</evidence>
<evidence type="ECO:0000269" key="3">
    <source>
    </source>
</evidence>
<evidence type="ECO:0000269" key="4">
    <source>
    </source>
</evidence>
<evidence type="ECO:0000269" key="5">
    <source>
    </source>
</evidence>
<evidence type="ECO:0000269" key="6">
    <source>
    </source>
</evidence>
<evidence type="ECO:0000269" key="7">
    <source>
    </source>
</evidence>
<evidence type="ECO:0000269" key="8">
    <source>
    </source>
</evidence>
<evidence type="ECO:0000269" key="9">
    <source>
    </source>
</evidence>
<evidence type="ECO:0000303" key="10">
    <source>
    </source>
</evidence>
<evidence type="ECO:0000305" key="11"/>
<evidence type="ECO:0000312" key="12">
    <source>
        <dbReference type="RGD" id="727957"/>
    </source>
</evidence>
<evidence type="ECO:0007744" key="13">
    <source>
        <dbReference type="PDB" id="6NMG"/>
    </source>
</evidence>
<evidence type="ECO:0007744" key="14">
    <source>
        <dbReference type="PDB" id="6NMJ"/>
    </source>
</evidence>
<evidence type="ECO:0007744" key="15">
    <source>
        <dbReference type="PDB" id="6TYL"/>
    </source>
</evidence>
<evidence type="ECO:0007744" key="16">
    <source>
        <dbReference type="PDB" id="6UKT"/>
    </source>
</evidence>
<evidence type="ECO:0007744" key="17">
    <source>
        <dbReference type="PDB" id="6VU5"/>
    </source>
</evidence>
<evidence type="ECO:0007744" key="18">
    <source>
        <dbReference type="PDB" id="6VU8"/>
    </source>
</evidence>
<evidence type="ECO:0007829" key="19">
    <source>
        <dbReference type="PDB" id="6NMG"/>
    </source>
</evidence>
<evidence type="ECO:0007829" key="20">
    <source>
        <dbReference type="PDB" id="6NMJ"/>
    </source>
</evidence>
<evidence type="ECO:0007829" key="21">
    <source>
        <dbReference type="PDB" id="6TYL"/>
    </source>
</evidence>
<evidence type="ECO:0007829" key="22">
    <source>
        <dbReference type="PDB" id="6VU5"/>
    </source>
</evidence>
<evidence type="ECO:0007829" key="23">
    <source>
        <dbReference type="PDB" id="8AHY"/>
    </source>
</evidence>
<feature type="chain" id="PRO_0000235894" description="Chaperone Ric-8A">
    <location>
        <begin position="1"/>
        <end position="530"/>
    </location>
</feature>
<feature type="modified residue" description="Phosphoserine; by CK2" evidence="6 8 9">
    <location>
        <position position="435"/>
    </location>
</feature>
<feature type="modified residue" description="Phosphothreonine; by CK2" evidence="6 8 9">
    <location>
        <position position="440"/>
    </location>
</feature>
<feature type="modified residue" description="Phosphothreonine" evidence="1">
    <location>
        <position position="442"/>
    </location>
</feature>
<feature type="modified residue" description="Phosphoserine" evidence="2">
    <location>
        <position position="501"/>
    </location>
</feature>
<feature type="modified residue" description="Phosphoserine" evidence="9">
    <location>
        <position position="522"/>
    </location>
</feature>
<feature type="modified residue" description="Phosphoserine" evidence="6 9">
    <location>
        <position position="523"/>
    </location>
</feature>
<feature type="modified residue" description="Phosphoserine" evidence="6 9">
    <location>
        <position position="527"/>
    </location>
</feature>
<feature type="mutagenesis site" description="Abolished ability to fold GNAQ." evidence="9">
    <original>R</original>
    <variation>E</variation>
    <location>
        <position position="71"/>
    </location>
</feature>
<feature type="mutagenesis site" description="Abolished ability to fold GNAQ." evidence="9">
    <original>N</original>
    <variation>A</variation>
    <location>
        <position position="123"/>
    </location>
</feature>
<feature type="mutagenesis site" description="Does not affect ability to fold GNAQ." evidence="9">
    <original>F</original>
    <variation>A</variation>
    <location>
        <position position="163"/>
    </location>
</feature>
<feature type="mutagenesis site" description="Does not affect ability to fold GNAQ." evidence="9">
    <original>L</original>
    <variation>W</variation>
    <location>
        <position position="174"/>
    </location>
</feature>
<feature type="mutagenesis site" description="Does not affect ability to fold GNAQ." evidence="9">
    <original>K</original>
    <variation>A</variation>
    <location>
        <position position="225"/>
    </location>
</feature>
<feature type="mutagenesis site" description="Does not affect ability to fold GNAQ." evidence="9">
    <original>F</original>
    <variation>W</variation>
    <location>
        <position position="228"/>
    </location>
</feature>
<feature type="mutagenesis site" description="Reduced ability to fold GNAQ." evidence="9">
    <location>
        <position position="273"/>
    </location>
</feature>
<feature type="mutagenesis site" description="Does not affect ability to fold GNAQ." evidence="9">
    <original>RPE</original>
    <variation>APA</variation>
    <location>
        <begin position="365"/>
        <end position="367"/>
    </location>
</feature>
<feature type="mutagenesis site" description="Does not affect ability to fold GNAQ." evidence="9">
    <original>T</original>
    <variation>A</variation>
    <location>
        <position position="381"/>
    </location>
</feature>
<feature type="mutagenesis site" description="Reduced ability to promote guanine exchange of G-alpha proteins." evidence="8">
    <original>L</original>
    <variation>E</variation>
    <location>
        <position position="383"/>
    </location>
</feature>
<feature type="mutagenesis site" description="Does not greatly affect ability to fold GNAQ." evidence="9">
    <original>R</original>
    <variation>A</variation>
    <location>
        <position position="389"/>
    </location>
</feature>
<feature type="mutagenesis site" description="Does not affect ability to promote guanine exchange of G-alpha proteins." evidence="8">
    <original>Y</original>
    <variation>A</variation>
    <location>
        <position position="412"/>
    </location>
</feature>
<feature type="mutagenesis site" description="Strongly reduced ability to promote guanine exchange of G-alpha proteins." evidence="8">
    <original>A</original>
    <variation>W</variation>
    <location>
        <position position="415"/>
    </location>
</feature>
<feature type="mutagenesis site" description="Does not greatly affect ability to fold GNAQ." evidence="9">
    <original>A</original>
    <variation>W</variation>
    <location>
        <position position="416"/>
    </location>
</feature>
<feature type="mutagenesis site" description="Abolished ability to fold GNAQ." evidence="9">
    <location>
        <position position="420"/>
    </location>
</feature>
<feature type="mutagenesis site" description="Decreased ability to fold G-alpha proteins." evidence="6 7 8">
    <original>S</original>
    <variation>A</variation>
    <location>
        <position position="435"/>
    </location>
</feature>
<feature type="mutagenesis site" description="Mimics phosphorylation; partial ability to fold G-alpha proteins." evidence="6">
    <original>S</original>
    <variation>D</variation>
    <location>
        <position position="435"/>
    </location>
</feature>
<feature type="mutagenesis site" description="Decreased ability to fold G-alpha proteins." evidence="6 7 8">
    <original>T</original>
    <variation>A</variation>
    <location>
        <position position="440"/>
    </location>
</feature>
<feature type="mutagenesis site" description="Mimics phosphorylation; partial ability to fold G-alpha proteins." evidence="6">
    <original>T</original>
    <variation>D</variation>
    <location>
        <position position="440"/>
    </location>
</feature>
<feature type="mutagenesis site" description="Reduced ability to promote guanine exchange of G-alpha proteins." evidence="8">
    <original>E</original>
    <variation>A</variation>
    <variation>K</variation>
    <location>
        <position position="478"/>
    </location>
</feature>
<feature type="mutagenesis site" description="Reduced ability to promote guanine exchange of G-alpha proteins." evidence="8">
    <original>L</original>
    <variation>D</variation>
    <location>
        <position position="482"/>
    </location>
</feature>
<feature type="sequence conflict" description="In Ref. 2; AAO23336." evidence="11" ref="2">
    <original>Y</original>
    <variation>F</variation>
    <location>
        <position position="232"/>
    </location>
</feature>
<feature type="sequence conflict" description="In Ref. 2; AAO23336." evidence="11" ref="2">
    <original>A</original>
    <variation>R</variation>
    <location>
        <position position="262"/>
    </location>
</feature>
<feature type="sequence conflict" description="In Ref. 2; AAO23336." evidence="11" ref="2">
    <original>EDEDTD</original>
    <variation>RMRTP</variation>
    <location>
        <begin position="436"/>
        <end position="441"/>
    </location>
</feature>
<feature type="helix" evidence="19">
    <location>
        <begin position="3"/>
        <end position="11"/>
    </location>
</feature>
<feature type="helix" evidence="19">
    <location>
        <begin position="15"/>
        <end position="28"/>
    </location>
</feature>
<feature type="turn" evidence="22">
    <location>
        <begin position="29"/>
        <end position="31"/>
    </location>
</feature>
<feature type="helix" evidence="19">
    <location>
        <begin position="32"/>
        <end position="34"/>
    </location>
</feature>
<feature type="helix" evidence="20">
    <location>
        <begin position="37"/>
        <end position="39"/>
    </location>
</feature>
<feature type="helix" evidence="19">
    <location>
        <begin position="40"/>
        <end position="54"/>
    </location>
</feature>
<feature type="helix" evidence="19">
    <location>
        <begin position="63"/>
        <end position="73"/>
    </location>
</feature>
<feature type="turn" evidence="19">
    <location>
        <begin position="77"/>
        <end position="79"/>
    </location>
</feature>
<feature type="helix" evidence="19">
    <location>
        <begin position="80"/>
        <end position="83"/>
    </location>
</feature>
<feature type="helix" evidence="19">
    <location>
        <begin position="86"/>
        <end position="95"/>
    </location>
</feature>
<feature type="helix" evidence="19">
    <location>
        <begin position="111"/>
        <end position="127"/>
    </location>
</feature>
<feature type="helix" evidence="19">
    <location>
        <begin position="129"/>
        <end position="137"/>
    </location>
</feature>
<feature type="turn" evidence="19">
    <location>
        <begin position="138"/>
        <end position="140"/>
    </location>
</feature>
<feature type="helix" evidence="19">
    <location>
        <begin position="141"/>
        <end position="149"/>
    </location>
</feature>
<feature type="turn" evidence="19">
    <location>
        <begin position="150"/>
        <end position="153"/>
    </location>
</feature>
<feature type="helix" evidence="19">
    <location>
        <begin position="158"/>
        <end position="174"/>
    </location>
</feature>
<feature type="helix" evidence="19">
    <location>
        <begin position="176"/>
        <end position="184"/>
    </location>
</feature>
<feature type="helix" evidence="19">
    <location>
        <begin position="188"/>
        <end position="200"/>
    </location>
</feature>
<feature type="strand" evidence="21">
    <location>
        <begin position="202"/>
        <end position="204"/>
    </location>
</feature>
<feature type="helix" evidence="19">
    <location>
        <begin position="214"/>
        <end position="231"/>
    </location>
</feature>
<feature type="turn" evidence="19">
    <location>
        <begin position="232"/>
        <end position="234"/>
    </location>
</feature>
<feature type="helix" evidence="19">
    <location>
        <begin position="241"/>
        <end position="258"/>
    </location>
</feature>
<feature type="strand" evidence="20">
    <location>
        <begin position="261"/>
        <end position="263"/>
    </location>
</feature>
<feature type="helix" evidence="19">
    <location>
        <begin position="264"/>
        <end position="266"/>
    </location>
</feature>
<feature type="helix" evidence="19">
    <location>
        <begin position="267"/>
        <end position="278"/>
    </location>
</feature>
<feature type="helix" evidence="19">
    <location>
        <begin position="283"/>
        <end position="290"/>
    </location>
</feature>
<feature type="strand" evidence="19">
    <location>
        <begin position="296"/>
        <end position="298"/>
    </location>
</feature>
<feature type="strand" evidence="19">
    <location>
        <begin position="300"/>
        <end position="305"/>
    </location>
</feature>
<feature type="helix" evidence="19">
    <location>
        <begin position="307"/>
        <end position="322"/>
    </location>
</feature>
<feature type="strand" evidence="22">
    <location>
        <begin position="323"/>
        <end position="325"/>
    </location>
</feature>
<feature type="helix" evidence="19">
    <location>
        <begin position="327"/>
        <end position="330"/>
    </location>
</feature>
<feature type="helix" evidence="19">
    <location>
        <begin position="331"/>
        <end position="343"/>
    </location>
</feature>
<feature type="helix" evidence="19">
    <location>
        <begin position="345"/>
        <end position="355"/>
    </location>
</feature>
<feature type="strand" evidence="19">
    <location>
        <begin position="367"/>
        <end position="371"/>
    </location>
</feature>
<feature type="helix" evidence="19">
    <location>
        <begin position="372"/>
        <end position="380"/>
    </location>
</feature>
<feature type="helix" evidence="19">
    <location>
        <begin position="385"/>
        <end position="398"/>
    </location>
</feature>
<feature type="turn" evidence="19">
    <location>
        <begin position="399"/>
        <end position="401"/>
    </location>
</feature>
<feature type="helix" evidence="23">
    <location>
        <begin position="405"/>
        <end position="409"/>
    </location>
</feature>
<feature type="helix" evidence="23">
    <location>
        <begin position="414"/>
        <end position="427"/>
    </location>
</feature>
<feature type="helix" evidence="21">
    <location>
        <begin position="445"/>
        <end position="447"/>
    </location>
</feature>
<feature type="turn" evidence="21">
    <location>
        <begin position="453"/>
        <end position="455"/>
    </location>
</feature>
<feature type="turn" evidence="21">
    <location>
        <begin position="467"/>
        <end position="469"/>
    </location>
</feature>
<feature type="helix" evidence="21">
    <location>
        <begin position="471"/>
        <end position="474"/>
    </location>
</feature>
<feature type="helix" evidence="21">
    <location>
        <begin position="476"/>
        <end position="482"/>
    </location>
</feature>
<feature type="turn" evidence="21">
    <location>
        <begin position="483"/>
        <end position="485"/>
    </location>
</feature>